<name>FIS_SALA4</name>
<reference key="1">
    <citation type="journal article" date="2011" name="J. Bacteriol.">
        <title>Comparative genomics of 28 Salmonella enterica isolates: evidence for CRISPR-mediated adaptive sublineage evolution.</title>
        <authorList>
            <person name="Fricke W.F."/>
            <person name="Mammel M.K."/>
            <person name="McDermott P.F."/>
            <person name="Tartera C."/>
            <person name="White D.G."/>
            <person name="Leclerc J.E."/>
            <person name="Ravel J."/>
            <person name="Cebula T.A."/>
        </authorList>
    </citation>
    <scope>NUCLEOTIDE SEQUENCE [LARGE SCALE GENOMIC DNA]</scope>
    <source>
        <strain>SL483</strain>
    </source>
</reference>
<organism>
    <name type="scientific">Salmonella agona (strain SL483)</name>
    <dbReference type="NCBI Taxonomy" id="454166"/>
    <lineage>
        <taxon>Bacteria</taxon>
        <taxon>Pseudomonadati</taxon>
        <taxon>Pseudomonadota</taxon>
        <taxon>Gammaproteobacteria</taxon>
        <taxon>Enterobacterales</taxon>
        <taxon>Enterobacteriaceae</taxon>
        <taxon>Salmonella</taxon>
    </lineage>
</organism>
<gene>
    <name evidence="1" type="primary">fis</name>
    <name type="ordered locus">SeAg_B3576</name>
</gene>
<dbReference type="EMBL" id="CP001138">
    <property type="protein sequence ID" value="ACH49540.1"/>
    <property type="molecule type" value="Genomic_DNA"/>
</dbReference>
<dbReference type="RefSeq" id="WP_000462905.1">
    <property type="nucleotide sequence ID" value="NC_011149.1"/>
</dbReference>
<dbReference type="SMR" id="B5F7P5"/>
<dbReference type="GeneID" id="98390389"/>
<dbReference type="KEGG" id="sea:SeAg_B3576"/>
<dbReference type="HOGENOM" id="CLU_158040_3_0_6"/>
<dbReference type="Proteomes" id="UP000008819">
    <property type="component" value="Chromosome"/>
</dbReference>
<dbReference type="GO" id="GO:0003700">
    <property type="term" value="F:DNA-binding transcription factor activity"/>
    <property type="evidence" value="ECO:0007669"/>
    <property type="project" value="UniProtKB-UniRule"/>
</dbReference>
<dbReference type="GO" id="GO:0043565">
    <property type="term" value="F:sequence-specific DNA binding"/>
    <property type="evidence" value="ECO:0007669"/>
    <property type="project" value="InterPro"/>
</dbReference>
<dbReference type="FunFam" id="1.10.10.60:FF:000006">
    <property type="entry name" value="DNA-binding protein Fis"/>
    <property type="match status" value="1"/>
</dbReference>
<dbReference type="Gene3D" id="1.10.10.60">
    <property type="entry name" value="Homeodomain-like"/>
    <property type="match status" value="1"/>
</dbReference>
<dbReference type="HAMAP" id="MF_00166">
    <property type="entry name" value="DNA_binding_Fis"/>
    <property type="match status" value="1"/>
</dbReference>
<dbReference type="InterPro" id="IPR005412">
    <property type="entry name" value="Fis_DNA-bd"/>
</dbReference>
<dbReference type="InterPro" id="IPR009057">
    <property type="entry name" value="Homeodomain-like_sf"/>
</dbReference>
<dbReference type="InterPro" id="IPR002197">
    <property type="entry name" value="HTH_Fis"/>
</dbReference>
<dbReference type="InterPro" id="IPR050207">
    <property type="entry name" value="Trans_regulatory_Fis"/>
</dbReference>
<dbReference type="NCBIfam" id="NF001659">
    <property type="entry name" value="PRK00430.1"/>
    <property type="match status" value="1"/>
</dbReference>
<dbReference type="PANTHER" id="PTHR47918">
    <property type="entry name" value="DNA-BINDING PROTEIN FIS"/>
    <property type="match status" value="1"/>
</dbReference>
<dbReference type="PANTHER" id="PTHR47918:SF1">
    <property type="entry name" value="DNA-BINDING PROTEIN FIS"/>
    <property type="match status" value="1"/>
</dbReference>
<dbReference type="Pfam" id="PF02954">
    <property type="entry name" value="HTH_8"/>
    <property type="match status" value="1"/>
</dbReference>
<dbReference type="PIRSF" id="PIRSF002097">
    <property type="entry name" value="DNA-binding_Fis"/>
    <property type="match status" value="1"/>
</dbReference>
<dbReference type="PRINTS" id="PR01591">
    <property type="entry name" value="DNABINDNGFIS"/>
</dbReference>
<dbReference type="PRINTS" id="PR01590">
    <property type="entry name" value="HTHFIS"/>
</dbReference>
<dbReference type="SUPFAM" id="SSF46689">
    <property type="entry name" value="Homeodomain-like"/>
    <property type="match status" value="1"/>
</dbReference>
<accession>B5F7P5</accession>
<feature type="chain" id="PRO_1000097457" description="DNA-binding protein Fis">
    <location>
        <begin position="1"/>
        <end position="98"/>
    </location>
</feature>
<feature type="DNA-binding region" description="H-T-H motif" evidence="1">
    <location>
        <begin position="74"/>
        <end position="93"/>
    </location>
</feature>
<sequence length="98" mass="11240">MFEQRVNSDVLTVSTVNSQDQVTQKPLRDSVKQALKNYFAQLNGQDVNDLYELVLAEVEQPLLDMVMQYTRGNQTRAALMMGINRGTLRKKLKKYGMN</sequence>
<keyword id="KW-0010">Activator</keyword>
<keyword id="KW-0238">DNA-binding</keyword>
<keyword id="KW-0804">Transcription</keyword>
<keyword id="KW-0805">Transcription regulation</keyword>
<proteinExistence type="inferred from homology"/>
<comment type="function">
    <text evidence="1">Activates ribosomal RNA transcription. Plays a direct role in upstream activation of rRNA promoters.</text>
</comment>
<comment type="subunit">
    <text evidence="1">Homodimer.</text>
</comment>
<comment type="similarity">
    <text evidence="1">Belongs to the transcriptional regulatory Fis family.</text>
</comment>
<evidence type="ECO:0000255" key="1">
    <source>
        <dbReference type="HAMAP-Rule" id="MF_00166"/>
    </source>
</evidence>
<protein>
    <recommendedName>
        <fullName evidence="1">DNA-binding protein Fis</fullName>
    </recommendedName>
</protein>